<accession>Q7XPW8</accession>
<accession>B7EFR3</accession>
<comment type="function">
    <text evidence="1 3">Cysteine protease that plays a key role in autophagy by mediating both proteolytic activation and delipidation of ATG8 family proteins. The protease activity is required for proteolytic activation of ATG8 family proteins: cleaves the C-terminal amino acid of ATG8 proteins to reveal a C-terminal glycine (By similarity). Exposure of the glycine at the C-terminus is essential for ATG8 proteins conjugation to phosphatidylethanolamine (PE) and insertion to membranes, which is necessary for autophagy. In addition to the protease activity, also mediates delipidation of PE-conjugated ATG8 proteins (By similarity).</text>
</comment>
<comment type="catalytic activity">
    <reaction evidence="3">
        <text>[protein]-C-terminal L-amino acid-glycyl-phosphatidylethanolamide + H2O = [protein]-C-terminal L-amino acid-glycine + a 1,2-diacyl-sn-glycero-3-phosphoethanolamine</text>
        <dbReference type="Rhea" id="RHEA:67548"/>
        <dbReference type="Rhea" id="RHEA-COMP:17323"/>
        <dbReference type="Rhea" id="RHEA-COMP:17324"/>
        <dbReference type="ChEBI" id="CHEBI:15377"/>
        <dbReference type="ChEBI" id="CHEBI:64612"/>
        <dbReference type="ChEBI" id="CHEBI:172940"/>
        <dbReference type="ChEBI" id="CHEBI:172941"/>
    </reaction>
    <physiologicalReaction direction="left-to-right" evidence="3">
        <dbReference type="Rhea" id="RHEA:67549"/>
    </physiologicalReaction>
</comment>
<comment type="subunit">
    <text evidence="1">Interacts with ATG8.</text>
</comment>
<comment type="subcellular location">
    <subcellularLocation>
        <location evidence="2">Cytoplasm</location>
    </subcellularLocation>
</comment>
<comment type="similarity">
    <text evidence="5">Belongs to the peptidase C54 family.</text>
</comment>
<protein>
    <recommendedName>
        <fullName evidence="5">Cysteine protease ATG4B</fullName>
        <ecNumber evidence="3">3.4.22.-</ecNumber>
    </recommendedName>
    <alternativeName>
        <fullName>Autophagy-related protein 4 homolog B</fullName>
    </alternativeName>
</protein>
<keyword id="KW-0072">Autophagy</keyword>
<keyword id="KW-0963">Cytoplasm</keyword>
<keyword id="KW-0378">Hydrolase</keyword>
<keyword id="KW-0645">Protease</keyword>
<keyword id="KW-0653">Protein transport</keyword>
<keyword id="KW-1185">Reference proteome</keyword>
<keyword id="KW-0788">Thiol protease</keyword>
<keyword id="KW-0813">Transport</keyword>
<keyword id="KW-0833">Ubl conjugation pathway</keyword>
<proteinExistence type="evidence at transcript level"/>
<feature type="chain" id="PRO_0000286904" description="Cysteine protease ATG4B">
    <location>
        <begin position="1"/>
        <end position="478"/>
    </location>
</feature>
<feature type="region of interest" description="Disordered" evidence="4">
    <location>
        <begin position="1"/>
        <end position="31"/>
    </location>
</feature>
<feature type="compositionally biased region" description="Polar residues" evidence="4">
    <location>
        <begin position="1"/>
        <end position="15"/>
    </location>
</feature>
<feature type="active site" description="Nucleophile" evidence="3">
    <location>
        <position position="164"/>
    </location>
</feature>
<feature type="active site" evidence="3">
    <location>
        <position position="361"/>
    </location>
</feature>
<feature type="active site" evidence="3">
    <location>
        <position position="363"/>
    </location>
</feature>
<dbReference type="EC" id="3.4.22.-" evidence="3"/>
<dbReference type="EMBL" id="AL606641">
    <property type="protein sequence ID" value="CAE03430.1"/>
    <property type="molecule type" value="Genomic_DNA"/>
</dbReference>
<dbReference type="EMBL" id="AP008210">
    <property type="protein sequence ID" value="BAF16207.1"/>
    <property type="molecule type" value="Genomic_DNA"/>
</dbReference>
<dbReference type="EMBL" id="AP014960">
    <property type="protein sequence ID" value="BAS91684.1"/>
    <property type="molecule type" value="Genomic_DNA"/>
</dbReference>
<dbReference type="EMBL" id="AK069012">
    <property type="protein sequence ID" value="BAG91210.1"/>
    <property type="molecule type" value="mRNA"/>
</dbReference>
<dbReference type="RefSeq" id="XP_015637247.1">
    <property type="nucleotide sequence ID" value="XM_015781761.1"/>
</dbReference>
<dbReference type="RefSeq" id="XP_015637248.1">
    <property type="nucleotide sequence ID" value="XM_015781762.1"/>
</dbReference>
<dbReference type="RefSeq" id="XP_015637249.1">
    <property type="nucleotide sequence ID" value="XM_015781763.1"/>
</dbReference>
<dbReference type="SMR" id="Q7XPW8"/>
<dbReference type="FunCoup" id="Q7XPW8">
    <property type="interactions" value="2785"/>
</dbReference>
<dbReference type="STRING" id="39947.Q7XPW8"/>
<dbReference type="PaxDb" id="39947-Q7XPW8"/>
<dbReference type="EnsemblPlants" id="Os04t0682000-01">
    <property type="protein sequence ID" value="Os04t0682000-01"/>
    <property type="gene ID" value="Os04g0682000"/>
</dbReference>
<dbReference type="Gramene" id="Os04t0682000-01">
    <property type="protein sequence ID" value="Os04t0682000-01"/>
    <property type="gene ID" value="Os04g0682000"/>
</dbReference>
<dbReference type="KEGG" id="dosa:Os04g0682000"/>
<dbReference type="eggNOG" id="KOG2674">
    <property type="taxonomic scope" value="Eukaryota"/>
</dbReference>
<dbReference type="HOGENOM" id="CLU_021259_1_0_1"/>
<dbReference type="InParanoid" id="Q7XPW8"/>
<dbReference type="OMA" id="TGFGCMI"/>
<dbReference type="OrthoDB" id="2960936at2759"/>
<dbReference type="Proteomes" id="UP000000763">
    <property type="component" value="Chromosome 4"/>
</dbReference>
<dbReference type="Proteomes" id="UP000059680">
    <property type="component" value="Chromosome 4"/>
</dbReference>
<dbReference type="GO" id="GO:0005737">
    <property type="term" value="C:cytoplasm"/>
    <property type="evidence" value="ECO:0000318"/>
    <property type="project" value="GO_Central"/>
</dbReference>
<dbReference type="GO" id="GO:0004197">
    <property type="term" value="F:cysteine-type endopeptidase activity"/>
    <property type="evidence" value="ECO:0000318"/>
    <property type="project" value="GO_Central"/>
</dbReference>
<dbReference type="GO" id="GO:0019786">
    <property type="term" value="F:protein-phosphatidylethanolamide deconjugating activity"/>
    <property type="evidence" value="ECO:0000318"/>
    <property type="project" value="GO_Central"/>
</dbReference>
<dbReference type="GO" id="GO:0035973">
    <property type="term" value="P:aggrephagy"/>
    <property type="evidence" value="ECO:0000318"/>
    <property type="project" value="GO_Central"/>
</dbReference>
<dbReference type="GO" id="GO:0000045">
    <property type="term" value="P:autophagosome assembly"/>
    <property type="evidence" value="ECO:0000318"/>
    <property type="project" value="GO_Central"/>
</dbReference>
<dbReference type="GO" id="GO:0000423">
    <property type="term" value="P:mitophagy"/>
    <property type="evidence" value="ECO:0000318"/>
    <property type="project" value="GO_Central"/>
</dbReference>
<dbReference type="GO" id="GO:0034727">
    <property type="term" value="P:piecemeal microautophagy of the nucleus"/>
    <property type="evidence" value="ECO:0000318"/>
    <property type="project" value="GO_Central"/>
</dbReference>
<dbReference type="GO" id="GO:0016485">
    <property type="term" value="P:protein processing"/>
    <property type="evidence" value="ECO:0000318"/>
    <property type="project" value="GO_Central"/>
</dbReference>
<dbReference type="GO" id="GO:0015031">
    <property type="term" value="P:protein transport"/>
    <property type="evidence" value="ECO:0007669"/>
    <property type="project" value="UniProtKB-KW"/>
</dbReference>
<dbReference type="InterPro" id="IPR038765">
    <property type="entry name" value="Papain-like_cys_pep_sf"/>
</dbReference>
<dbReference type="InterPro" id="IPR005078">
    <property type="entry name" value="Peptidase_C54"/>
</dbReference>
<dbReference type="InterPro" id="IPR046792">
    <property type="entry name" value="Peptidase_C54_cat"/>
</dbReference>
<dbReference type="PANTHER" id="PTHR22624:SF49">
    <property type="entry name" value="CYSTEINE PROTEASE"/>
    <property type="match status" value="1"/>
</dbReference>
<dbReference type="PANTHER" id="PTHR22624">
    <property type="entry name" value="CYSTEINE PROTEASE ATG4"/>
    <property type="match status" value="1"/>
</dbReference>
<dbReference type="Pfam" id="PF03416">
    <property type="entry name" value="Peptidase_C54"/>
    <property type="match status" value="1"/>
</dbReference>
<dbReference type="SUPFAM" id="SSF54001">
    <property type="entry name" value="Cysteine proteinases"/>
    <property type="match status" value="1"/>
</dbReference>
<organism>
    <name type="scientific">Oryza sativa subsp. japonica</name>
    <name type="common">Rice</name>
    <dbReference type="NCBI Taxonomy" id="39947"/>
    <lineage>
        <taxon>Eukaryota</taxon>
        <taxon>Viridiplantae</taxon>
        <taxon>Streptophyta</taxon>
        <taxon>Embryophyta</taxon>
        <taxon>Tracheophyta</taxon>
        <taxon>Spermatophyta</taxon>
        <taxon>Magnoliopsida</taxon>
        <taxon>Liliopsida</taxon>
        <taxon>Poales</taxon>
        <taxon>Poaceae</taxon>
        <taxon>BOP clade</taxon>
        <taxon>Oryzoideae</taxon>
        <taxon>Oryzeae</taxon>
        <taxon>Oryzinae</taxon>
        <taxon>Oryza</taxon>
        <taxon>Oryza sativa</taxon>
    </lineage>
</organism>
<sequence>MTSLPDRGVSSSSSDPLCEGNIAPCSSSSEQKEDCSLKQSKTSILSCVFNSPFNIFEAHQDSSANKSPKSSSGSYDWSRVLRRIVCSGSMWRFLGTSKVLTSSDVWFLGKCYKLSSEESSSDSDSESGHATFLEDFSSRIWITYRRGFDAISDSKYTSDVNWGCMVRSSQMLVAQALIFHHLGRSWRRPLEKPYNPEYIGILHMFGDSEACAFSIHNLLQAGNSYGLAAGSWVGPYAMCRAWQTLVRTNREQHEVVDGNESFPMALYVVSGDEDGERGGAPVVCIDVAAQLCCDFNKGQSTWSPILLLVPLVLGLDKINPRYIPLLKETFTFPQSLGILGGKPGTSTYIAGVQDDRALYLDPHEVQMAVDIAADNIEADTSSYHCSTVRDLALDLIDPSLAIGFYCRDKDDFDDFCSRATELVDKANGAPLFTVVQSVQPSKQMYNQDDVLGISGDGNINVEDLDASGETGEEEWQIL</sequence>
<evidence type="ECO:0000250" key="1">
    <source>
        <dbReference type="UniProtKB" id="Q2XPP4"/>
    </source>
</evidence>
<evidence type="ECO:0000250" key="2">
    <source>
        <dbReference type="UniProtKB" id="Q8BGE6"/>
    </source>
</evidence>
<evidence type="ECO:0000250" key="3">
    <source>
        <dbReference type="UniProtKB" id="Q9Y4P1"/>
    </source>
</evidence>
<evidence type="ECO:0000256" key="4">
    <source>
        <dbReference type="SAM" id="MobiDB-lite"/>
    </source>
</evidence>
<evidence type="ECO:0000305" key="5"/>
<name>ATG4B_ORYSJ</name>
<gene>
    <name type="primary">ATG4B</name>
    <name type="synonym">APG4B</name>
    <name type="ordered locus">Os04g0682000</name>
    <name type="ordered locus">LOC_Os04g58560</name>
    <name type="ORF">OSJNBa0032F06.13</name>
</gene>
<reference key="1">
    <citation type="journal article" date="2002" name="Nature">
        <title>Sequence and analysis of rice chromosome 4.</title>
        <authorList>
            <person name="Feng Q."/>
            <person name="Zhang Y."/>
            <person name="Hao P."/>
            <person name="Wang S."/>
            <person name="Fu G."/>
            <person name="Huang Y."/>
            <person name="Li Y."/>
            <person name="Zhu J."/>
            <person name="Liu Y."/>
            <person name="Hu X."/>
            <person name="Jia P."/>
            <person name="Zhang Y."/>
            <person name="Zhao Q."/>
            <person name="Ying K."/>
            <person name="Yu S."/>
            <person name="Tang Y."/>
            <person name="Weng Q."/>
            <person name="Zhang L."/>
            <person name="Lu Y."/>
            <person name="Mu J."/>
            <person name="Lu Y."/>
            <person name="Zhang L.S."/>
            <person name="Yu Z."/>
            <person name="Fan D."/>
            <person name="Liu X."/>
            <person name="Lu T."/>
            <person name="Li C."/>
            <person name="Wu Y."/>
            <person name="Sun T."/>
            <person name="Lei H."/>
            <person name="Li T."/>
            <person name="Hu H."/>
            <person name="Guan J."/>
            <person name="Wu M."/>
            <person name="Zhang R."/>
            <person name="Zhou B."/>
            <person name="Chen Z."/>
            <person name="Chen L."/>
            <person name="Jin Z."/>
            <person name="Wang R."/>
            <person name="Yin H."/>
            <person name="Cai Z."/>
            <person name="Ren S."/>
            <person name="Lv G."/>
            <person name="Gu W."/>
            <person name="Zhu G."/>
            <person name="Tu Y."/>
            <person name="Jia J."/>
            <person name="Zhang Y."/>
            <person name="Chen J."/>
            <person name="Kang H."/>
            <person name="Chen X."/>
            <person name="Shao C."/>
            <person name="Sun Y."/>
            <person name="Hu Q."/>
            <person name="Zhang X."/>
            <person name="Zhang W."/>
            <person name="Wang L."/>
            <person name="Ding C."/>
            <person name="Sheng H."/>
            <person name="Gu J."/>
            <person name="Chen S."/>
            <person name="Ni L."/>
            <person name="Zhu F."/>
            <person name="Chen W."/>
            <person name="Lan L."/>
            <person name="Lai Y."/>
            <person name="Cheng Z."/>
            <person name="Gu M."/>
            <person name="Jiang J."/>
            <person name="Li J."/>
            <person name="Hong G."/>
            <person name="Xue Y."/>
            <person name="Han B."/>
        </authorList>
    </citation>
    <scope>NUCLEOTIDE SEQUENCE [LARGE SCALE GENOMIC DNA]</scope>
    <source>
        <strain>cv. Nipponbare</strain>
    </source>
</reference>
<reference key="2">
    <citation type="journal article" date="2005" name="Nature">
        <title>The map-based sequence of the rice genome.</title>
        <authorList>
            <consortium name="International rice genome sequencing project (IRGSP)"/>
        </authorList>
    </citation>
    <scope>NUCLEOTIDE SEQUENCE [LARGE SCALE GENOMIC DNA]</scope>
    <source>
        <strain>cv. Nipponbare</strain>
    </source>
</reference>
<reference key="3">
    <citation type="journal article" date="2008" name="Nucleic Acids Res.">
        <title>The rice annotation project database (RAP-DB): 2008 update.</title>
        <authorList>
            <consortium name="The rice annotation project (RAP)"/>
        </authorList>
    </citation>
    <scope>GENOME REANNOTATION</scope>
    <source>
        <strain>cv. Nipponbare</strain>
    </source>
</reference>
<reference key="4">
    <citation type="journal article" date="2013" name="Rice">
        <title>Improvement of the Oryza sativa Nipponbare reference genome using next generation sequence and optical map data.</title>
        <authorList>
            <person name="Kawahara Y."/>
            <person name="de la Bastide M."/>
            <person name="Hamilton J.P."/>
            <person name="Kanamori H."/>
            <person name="McCombie W.R."/>
            <person name="Ouyang S."/>
            <person name="Schwartz D.C."/>
            <person name="Tanaka T."/>
            <person name="Wu J."/>
            <person name="Zhou S."/>
            <person name="Childs K.L."/>
            <person name="Davidson R.M."/>
            <person name="Lin H."/>
            <person name="Quesada-Ocampo L."/>
            <person name="Vaillancourt B."/>
            <person name="Sakai H."/>
            <person name="Lee S.S."/>
            <person name="Kim J."/>
            <person name="Numa H."/>
            <person name="Itoh T."/>
            <person name="Buell C.R."/>
            <person name="Matsumoto T."/>
        </authorList>
    </citation>
    <scope>GENOME REANNOTATION</scope>
    <source>
        <strain>cv. Nipponbare</strain>
    </source>
</reference>
<reference key="5">
    <citation type="journal article" date="2003" name="Science">
        <title>Collection, mapping, and annotation of over 28,000 cDNA clones from japonica rice.</title>
        <authorList>
            <consortium name="The rice full-length cDNA consortium"/>
        </authorList>
    </citation>
    <scope>NUCLEOTIDE SEQUENCE [LARGE SCALE MRNA]</scope>
    <source>
        <strain>cv. Nipponbare</strain>
    </source>
</reference>